<proteinExistence type="inferred from homology"/>
<comment type="function">
    <text evidence="1">Specifically catalyzes the N1-methylation of pseudouridine at position 54 (Psi54) in tRNAs.</text>
</comment>
<comment type="catalytic activity">
    <reaction evidence="1">
        <text>pseudouridine(54) in tRNA + S-adenosyl-L-methionine = N(1)-methylpseudouridine(54) in tRNA + S-adenosyl-L-homocysteine + H(+)</text>
        <dbReference type="Rhea" id="RHEA:55292"/>
        <dbReference type="Rhea" id="RHEA-COMP:14140"/>
        <dbReference type="Rhea" id="RHEA-COMP:14141"/>
        <dbReference type="ChEBI" id="CHEBI:15378"/>
        <dbReference type="ChEBI" id="CHEBI:57856"/>
        <dbReference type="ChEBI" id="CHEBI:59789"/>
        <dbReference type="ChEBI" id="CHEBI:65314"/>
        <dbReference type="ChEBI" id="CHEBI:74890"/>
        <dbReference type="EC" id="2.1.1.257"/>
    </reaction>
</comment>
<comment type="subunit">
    <text evidence="1">Homodimer.</text>
</comment>
<comment type="subcellular location">
    <subcellularLocation>
        <location evidence="1">Cytoplasm</location>
    </subcellularLocation>
</comment>
<comment type="similarity">
    <text evidence="1">Belongs to the methyltransferase superfamily. TrmY family.</text>
</comment>
<comment type="sequence caution" evidence="2">
    <conflict type="erroneous initiation">
        <sequence resource="EMBL-CDS" id="AAM04862"/>
    </conflict>
</comment>
<feature type="chain" id="PRO_0000157947" description="tRNA (pseudouridine(54)-N(1))-methyltransferase">
    <location>
        <begin position="1"/>
        <end position="211"/>
    </location>
</feature>
<feature type="binding site" evidence="1">
    <location>
        <position position="128"/>
    </location>
    <ligand>
        <name>S-adenosyl-L-methionine</name>
        <dbReference type="ChEBI" id="CHEBI:59789"/>
    </ligand>
</feature>
<feature type="binding site" evidence="1">
    <location>
        <position position="150"/>
    </location>
    <ligand>
        <name>S-adenosyl-L-methionine</name>
        <dbReference type="ChEBI" id="CHEBI:59789"/>
    </ligand>
</feature>
<feature type="binding site" evidence="1">
    <location>
        <position position="183"/>
    </location>
    <ligand>
        <name>S-adenosyl-L-methionine</name>
        <dbReference type="ChEBI" id="CHEBI:59789"/>
    </ligand>
</feature>
<gene>
    <name evidence="1" type="primary">trmY</name>
    <name type="ordered locus">MA_1448</name>
</gene>
<accession>Q8TQU1</accession>
<keyword id="KW-0963">Cytoplasm</keyword>
<keyword id="KW-0489">Methyltransferase</keyword>
<keyword id="KW-1185">Reference proteome</keyword>
<keyword id="KW-0949">S-adenosyl-L-methionine</keyword>
<keyword id="KW-0808">Transferase</keyword>
<keyword id="KW-0819">tRNA processing</keyword>
<sequence>MRDIVIIGHKAKTSGDFSLNDLPGSAGRMDILCRCVSSALFLSFGMRRDVNVHLLLLGEPEPGKIIRFEGLHLRYLNPDERSSGSLIQKALQKTVTEKDIRSTPGVWVRNGDLNTLLASFEGRTLFYLREDGEDIRGLDREIRDPVFILGDHMGVTEEEEKQLLEAGAKIISVGPISLHSNHCITLLHNELDRAEAERGEIPGGEKLRAGE</sequence>
<organism>
    <name type="scientific">Methanosarcina acetivorans (strain ATCC 35395 / DSM 2834 / JCM 12185 / C2A)</name>
    <dbReference type="NCBI Taxonomy" id="188937"/>
    <lineage>
        <taxon>Archaea</taxon>
        <taxon>Methanobacteriati</taxon>
        <taxon>Methanobacteriota</taxon>
        <taxon>Stenosarchaea group</taxon>
        <taxon>Methanomicrobia</taxon>
        <taxon>Methanosarcinales</taxon>
        <taxon>Methanosarcinaceae</taxon>
        <taxon>Methanosarcina</taxon>
    </lineage>
</organism>
<dbReference type="EC" id="2.1.1.257" evidence="1"/>
<dbReference type="EMBL" id="AE010299">
    <property type="protein sequence ID" value="AAM04862.1"/>
    <property type="status" value="ALT_INIT"/>
    <property type="molecule type" value="Genomic_DNA"/>
</dbReference>
<dbReference type="RefSeq" id="WP_048066221.1">
    <property type="nucleotide sequence ID" value="NC_003552.1"/>
</dbReference>
<dbReference type="SMR" id="Q8TQU1"/>
<dbReference type="STRING" id="188937.MA_1448"/>
<dbReference type="EnsemblBacteria" id="AAM04862">
    <property type="protein sequence ID" value="AAM04862"/>
    <property type="gene ID" value="MA_1448"/>
</dbReference>
<dbReference type="GeneID" id="1473336"/>
<dbReference type="KEGG" id="mac:MA_1448"/>
<dbReference type="HOGENOM" id="CLU_107018_0_0_2"/>
<dbReference type="InParanoid" id="Q8TQU1"/>
<dbReference type="OrthoDB" id="27492at2157"/>
<dbReference type="PhylomeDB" id="Q8TQU1"/>
<dbReference type="Proteomes" id="UP000002487">
    <property type="component" value="Chromosome"/>
</dbReference>
<dbReference type="GO" id="GO:0005737">
    <property type="term" value="C:cytoplasm"/>
    <property type="evidence" value="ECO:0007669"/>
    <property type="project" value="UniProtKB-SubCell"/>
</dbReference>
<dbReference type="GO" id="GO:0008757">
    <property type="term" value="F:S-adenosylmethionine-dependent methyltransferase activity"/>
    <property type="evidence" value="ECO:0000318"/>
    <property type="project" value="GO_Central"/>
</dbReference>
<dbReference type="GO" id="GO:0008175">
    <property type="term" value="F:tRNA methyltransferase activity"/>
    <property type="evidence" value="ECO:0000318"/>
    <property type="project" value="GO_Central"/>
</dbReference>
<dbReference type="GO" id="GO:0030488">
    <property type="term" value="P:tRNA methylation"/>
    <property type="evidence" value="ECO:0000318"/>
    <property type="project" value="GO_Central"/>
</dbReference>
<dbReference type="CDD" id="cd18087">
    <property type="entry name" value="TrmY-like"/>
    <property type="match status" value="1"/>
</dbReference>
<dbReference type="Gene3D" id="3.40.1280.10">
    <property type="match status" value="1"/>
</dbReference>
<dbReference type="HAMAP" id="MF_00587">
    <property type="entry name" value="tRNA_methyltr_TrmY"/>
    <property type="match status" value="1"/>
</dbReference>
<dbReference type="InterPro" id="IPR029028">
    <property type="entry name" value="Alpha/beta_knot_MTases"/>
</dbReference>
<dbReference type="InterPro" id="IPR007158">
    <property type="entry name" value="TrmY"/>
</dbReference>
<dbReference type="InterPro" id="IPR029026">
    <property type="entry name" value="tRNA_m1G_MTases_N"/>
</dbReference>
<dbReference type="NCBIfam" id="NF002560">
    <property type="entry name" value="PRK02135.1"/>
    <property type="match status" value="1"/>
</dbReference>
<dbReference type="PANTHER" id="PTHR40703">
    <property type="entry name" value="TRNA (PSEUDOURIDINE(54)-N(1))-METHYLTRANSFERASE"/>
    <property type="match status" value="1"/>
</dbReference>
<dbReference type="PANTHER" id="PTHR40703:SF1">
    <property type="entry name" value="TRNA (PSEUDOURIDINE(54)-N(1))-METHYLTRANSFERASE"/>
    <property type="match status" value="1"/>
</dbReference>
<dbReference type="Pfam" id="PF04013">
    <property type="entry name" value="Methyltrn_RNA_2"/>
    <property type="match status" value="1"/>
</dbReference>
<dbReference type="SUPFAM" id="SSF75217">
    <property type="entry name" value="alpha/beta knot"/>
    <property type="match status" value="1"/>
</dbReference>
<reference key="1">
    <citation type="journal article" date="2002" name="Genome Res.">
        <title>The genome of Methanosarcina acetivorans reveals extensive metabolic and physiological diversity.</title>
        <authorList>
            <person name="Galagan J.E."/>
            <person name="Nusbaum C."/>
            <person name="Roy A."/>
            <person name="Endrizzi M.G."/>
            <person name="Macdonald P."/>
            <person name="FitzHugh W."/>
            <person name="Calvo S."/>
            <person name="Engels R."/>
            <person name="Smirnov S."/>
            <person name="Atnoor D."/>
            <person name="Brown A."/>
            <person name="Allen N."/>
            <person name="Naylor J."/>
            <person name="Stange-Thomann N."/>
            <person name="DeArellano K."/>
            <person name="Johnson R."/>
            <person name="Linton L."/>
            <person name="McEwan P."/>
            <person name="McKernan K."/>
            <person name="Talamas J."/>
            <person name="Tirrell A."/>
            <person name="Ye W."/>
            <person name="Zimmer A."/>
            <person name="Barber R.D."/>
            <person name="Cann I."/>
            <person name="Graham D.E."/>
            <person name="Grahame D.A."/>
            <person name="Guss A.M."/>
            <person name="Hedderich R."/>
            <person name="Ingram-Smith C."/>
            <person name="Kuettner H.C."/>
            <person name="Krzycki J.A."/>
            <person name="Leigh J.A."/>
            <person name="Li W."/>
            <person name="Liu J."/>
            <person name="Mukhopadhyay B."/>
            <person name="Reeve J.N."/>
            <person name="Smith K."/>
            <person name="Springer T.A."/>
            <person name="Umayam L.A."/>
            <person name="White O."/>
            <person name="White R.H."/>
            <person name="de Macario E.C."/>
            <person name="Ferry J.G."/>
            <person name="Jarrell K.F."/>
            <person name="Jing H."/>
            <person name="Macario A.J.L."/>
            <person name="Paulsen I.T."/>
            <person name="Pritchett M."/>
            <person name="Sowers K.R."/>
            <person name="Swanson R.V."/>
            <person name="Zinder S.H."/>
            <person name="Lander E."/>
            <person name="Metcalf W.W."/>
            <person name="Birren B."/>
        </authorList>
    </citation>
    <scope>NUCLEOTIDE SEQUENCE [LARGE SCALE GENOMIC DNA]</scope>
    <source>
        <strain>ATCC 35395 / DSM 2834 / JCM 12185 / C2A</strain>
    </source>
</reference>
<evidence type="ECO:0000255" key="1">
    <source>
        <dbReference type="HAMAP-Rule" id="MF_00587"/>
    </source>
</evidence>
<evidence type="ECO:0000305" key="2"/>
<name>TRMY_METAC</name>
<protein>
    <recommendedName>
        <fullName evidence="1">tRNA (pseudouridine(54)-N(1))-methyltransferase</fullName>
        <ecNumber evidence="1">2.1.1.257</ecNumber>
    </recommendedName>
</protein>